<feature type="chain" id="PRO_1000012856" description="Lysine--tRNA ligase">
    <location>
        <begin position="1"/>
        <end position="508"/>
    </location>
</feature>
<feature type="binding site" evidence="1">
    <location>
        <position position="418"/>
    </location>
    <ligand>
        <name>Mg(2+)</name>
        <dbReference type="ChEBI" id="CHEBI:18420"/>
        <label>1</label>
    </ligand>
</feature>
<feature type="binding site" evidence="1">
    <location>
        <position position="425"/>
    </location>
    <ligand>
        <name>Mg(2+)</name>
        <dbReference type="ChEBI" id="CHEBI:18420"/>
        <label>1</label>
    </ligand>
</feature>
<feature type="binding site" evidence="1">
    <location>
        <position position="425"/>
    </location>
    <ligand>
        <name>Mg(2+)</name>
        <dbReference type="ChEBI" id="CHEBI:18420"/>
        <label>2</label>
    </ligand>
</feature>
<protein>
    <recommendedName>
        <fullName evidence="1">Lysine--tRNA ligase</fullName>
        <ecNumber evidence="1">6.1.1.6</ecNumber>
    </recommendedName>
    <alternativeName>
        <fullName evidence="1">Lysyl-tRNA synthetase</fullName>
        <shortName evidence="1">LysRS</shortName>
    </alternativeName>
</protein>
<keyword id="KW-0030">Aminoacyl-tRNA synthetase</keyword>
<keyword id="KW-0067">ATP-binding</keyword>
<keyword id="KW-0963">Cytoplasm</keyword>
<keyword id="KW-0436">Ligase</keyword>
<keyword id="KW-0460">Magnesium</keyword>
<keyword id="KW-0479">Metal-binding</keyword>
<keyword id="KW-0547">Nucleotide-binding</keyword>
<keyword id="KW-0648">Protein biosynthesis</keyword>
<organism>
    <name type="scientific">Burkholderia pseudomallei (strain 1710b)</name>
    <dbReference type="NCBI Taxonomy" id="320372"/>
    <lineage>
        <taxon>Bacteria</taxon>
        <taxon>Pseudomonadati</taxon>
        <taxon>Pseudomonadota</taxon>
        <taxon>Betaproteobacteria</taxon>
        <taxon>Burkholderiales</taxon>
        <taxon>Burkholderiaceae</taxon>
        <taxon>Burkholderia</taxon>
        <taxon>pseudomallei group</taxon>
    </lineage>
</organism>
<proteinExistence type="inferred from homology"/>
<gene>
    <name evidence="1" type="primary">lysS</name>
    <name type="ordered locus">BURPS1710b_2723</name>
</gene>
<comment type="catalytic activity">
    <reaction evidence="1">
        <text>tRNA(Lys) + L-lysine + ATP = L-lysyl-tRNA(Lys) + AMP + diphosphate</text>
        <dbReference type="Rhea" id="RHEA:20792"/>
        <dbReference type="Rhea" id="RHEA-COMP:9696"/>
        <dbReference type="Rhea" id="RHEA-COMP:9697"/>
        <dbReference type="ChEBI" id="CHEBI:30616"/>
        <dbReference type="ChEBI" id="CHEBI:32551"/>
        <dbReference type="ChEBI" id="CHEBI:33019"/>
        <dbReference type="ChEBI" id="CHEBI:78442"/>
        <dbReference type="ChEBI" id="CHEBI:78529"/>
        <dbReference type="ChEBI" id="CHEBI:456215"/>
        <dbReference type="EC" id="6.1.1.6"/>
    </reaction>
</comment>
<comment type="cofactor">
    <cofactor evidence="1">
        <name>Mg(2+)</name>
        <dbReference type="ChEBI" id="CHEBI:18420"/>
    </cofactor>
    <text evidence="1">Binds 3 Mg(2+) ions per subunit.</text>
</comment>
<comment type="subunit">
    <text evidence="1">Homodimer.</text>
</comment>
<comment type="subcellular location">
    <subcellularLocation>
        <location evidence="1">Cytoplasm</location>
    </subcellularLocation>
</comment>
<comment type="similarity">
    <text evidence="1">Belongs to the class-II aminoacyl-tRNA synthetase family.</text>
</comment>
<name>SYK_BURP1</name>
<accession>Q3JQP3</accession>
<reference key="1">
    <citation type="journal article" date="2010" name="Genome Biol. Evol.">
        <title>Continuing evolution of Burkholderia mallei through genome reduction and large-scale rearrangements.</title>
        <authorList>
            <person name="Losada L."/>
            <person name="Ronning C.M."/>
            <person name="DeShazer D."/>
            <person name="Woods D."/>
            <person name="Fedorova N."/>
            <person name="Kim H.S."/>
            <person name="Shabalina S.A."/>
            <person name="Pearson T.R."/>
            <person name="Brinkac L."/>
            <person name="Tan P."/>
            <person name="Nandi T."/>
            <person name="Crabtree J."/>
            <person name="Badger J."/>
            <person name="Beckstrom-Sternberg S."/>
            <person name="Saqib M."/>
            <person name="Schutzer S.E."/>
            <person name="Keim P."/>
            <person name="Nierman W.C."/>
        </authorList>
    </citation>
    <scope>NUCLEOTIDE SEQUENCE [LARGE SCALE GENOMIC DNA]</scope>
    <source>
        <strain>1710b</strain>
    </source>
</reference>
<sequence>MTEPTQPQAAVAADENQIVAERRDKLRALRDQGIAYPNDFQPTHHAAGLQTEYADADKEALDAKALDVAVAGRMMLKRVMGKASFATVQDGSGQIQFFVTPADVGAETYDAFKKWDLGDIVAARGVLFRTNKGELSVKCTELRLLAKALRPLPDKFHGLADQETRYRQRYVDLIVTPETRATFRARTKAIASIRKFMSDADFMEVETPMLHPIPGGAAAKPFVTHHNALDMQMFLRIAPELYLKRLIVGGFERVFEINRNFRNEGVSPRHNPEFTMMEFYAAYTDYRWLMDFTERLIRQAAVDALGTATIRYQGRELDLAKPFRRLTITQAIQKYAPNYTDGQLSDDAFLRGELKRLGVDVTQPAFLNAGIGALQLALFEETAEAQLWEPTFIIDYPIEVSPLARESDTVAGITERFELFVTGREIANGFSELNDPEDQAARFRKQVEQKDAGDEEAMFFDADYIRALEYGMPPTGGCGIGIDRLVMLLTDSPTIRDVLLFPHLRRED</sequence>
<evidence type="ECO:0000255" key="1">
    <source>
        <dbReference type="HAMAP-Rule" id="MF_00252"/>
    </source>
</evidence>
<dbReference type="EC" id="6.1.1.6" evidence="1"/>
<dbReference type="EMBL" id="CP000124">
    <property type="protein sequence ID" value="ABA50177.1"/>
    <property type="molecule type" value="Genomic_DNA"/>
</dbReference>
<dbReference type="RefSeq" id="WP_004527364.1">
    <property type="nucleotide sequence ID" value="NC_007434.1"/>
</dbReference>
<dbReference type="SMR" id="Q3JQP3"/>
<dbReference type="EnsemblBacteria" id="ABA50177">
    <property type="protein sequence ID" value="ABA50177"/>
    <property type="gene ID" value="BURPS1710b_2723"/>
</dbReference>
<dbReference type="KEGG" id="bpm:BURPS1710b_2723"/>
<dbReference type="HOGENOM" id="CLU_008255_6_0_4"/>
<dbReference type="Proteomes" id="UP000002700">
    <property type="component" value="Chromosome I"/>
</dbReference>
<dbReference type="GO" id="GO:0005829">
    <property type="term" value="C:cytosol"/>
    <property type="evidence" value="ECO:0007669"/>
    <property type="project" value="TreeGrafter"/>
</dbReference>
<dbReference type="GO" id="GO:0005524">
    <property type="term" value="F:ATP binding"/>
    <property type="evidence" value="ECO:0007669"/>
    <property type="project" value="UniProtKB-UniRule"/>
</dbReference>
<dbReference type="GO" id="GO:0004824">
    <property type="term" value="F:lysine-tRNA ligase activity"/>
    <property type="evidence" value="ECO:0007669"/>
    <property type="project" value="UniProtKB-UniRule"/>
</dbReference>
<dbReference type="GO" id="GO:0000287">
    <property type="term" value="F:magnesium ion binding"/>
    <property type="evidence" value="ECO:0007669"/>
    <property type="project" value="UniProtKB-UniRule"/>
</dbReference>
<dbReference type="GO" id="GO:0000049">
    <property type="term" value="F:tRNA binding"/>
    <property type="evidence" value="ECO:0007669"/>
    <property type="project" value="TreeGrafter"/>
</dbReference>
<dbReference type="GO" id="GO:0006430">
    <property type="term" value="P:lysyl-tRNA aminoacylation"/>
    <property type="evidence" value="ECO:0007669"/>
    <property type="project" value="UniProtKB-UniRule"/>
</dbReference>
<dbReference type="CDD" id="cd00775">
    <property type="entry name" value="LysRS_core"/>
    <property type="match status" value="1"/>
</dbReference>
<dbReference type="CDD" id="cd04322">
    <property type="entry name" value="LysRS_N"/>
    <property type="match status" value="1"/>
</dbReference>
<dbReference type="FunFam" id="2.40.50.140:FF:000024">
    <property type="entry name" value="Lysine--tRNA ligase"/>
    <property type="match status" value="1"/>
</dbReference>
<dbReference type="FunFam" id="3.30.930.10:FF:000001">
    <property type="entry name" value="Lysine--tRNA ligase"/>
    <property type="match status" value="1"/>
</dbReference>
<dbReference type="Gene3D" id="3.30.930.10">
    <property type="entry name" value="Bira Bifunctional Protein, Domain 2"/>
    <property type="match status" value="1"/>
</dbReference>
<dbReference type="Gene3D" id="2.40.50.140">
    <property type="entry name" value="Nucleic acid-binding proteins"/>
    <property type="match status" value="1"/>
</dbReference>
<dbReference type="HAMAP" id="MF_00252">
    <property type="entry name" value="Lys_tRNA_synth_class2"/>
    <property type="match status" value="1"/>
</dbReference>
<dbReference type="InterPro" id="IPR004364">
    <property type="entry name" value="Aa-tRNA-synt_II"/>
</dbReference>
<dbReference type="InterPro" id="IPR006195">
    <property type="entry name" value="aa-tRNA-synth_II"/>
</dbReference>
<dbReference type="InterPro" id="IPR045864">
    <property type="entry name" value="aa-tRNA-synth_II/BPL/LPL"/>
</dbReference>
<dbReference type="InterPro" id="IPR002313">
    <property type="entry name" value="Lys-tRNA-ligase_II"/>
</dbReference>
<dbReference type="InterPro" id="IPR044136">
    <property type="entry name" value="Lys-tRNA-ligase_II_N"/>
</dbReference>
<dbReference type="InterPro" id="IPR018149">
    <property type="entry name" value="Lys-tRNA-synth_II_C"/>
</dbReference>
<dbReference type="InterPro" id="IPR012340">
    <property type="entry name" value="NA-bd_OB-fold"/>
</dbReference>
<dbReference type="InterPro" id="IPR004365">
    <property type="entry name" value="NA-bd_OB_tRNA"/>
</dbReference>
<dbReference type="NCBIfam" id="TIGR00499">
    <property type="entry name" value="lysS_bact"/>
    <property type="match status" value="1"/>
</dbReference>
<dbReference type="NCBIfam" id="NF001756">
    <property type="entry name" value="PRK00484.1"/>
    <property type="match status" value="1"/>
</dbReference>
<dbReference type="PANTHER" id="PTHR42918:SF15">
    <property type="entry name" value="LYSINE--TRNA LIGASE, CHLOROPLASTIC_MITOCHONDRIAL"/>
    <property type="match status" value="1"/>
</dbReference>
<dbReference type="PANTHER" id="PTHR42918">
    <property type="entry name" value="LYSYL-TRNA SYNTHETASE"/>
    <property type="match status" value="1"/>
</dbReference>
<dbReference type="Pfam" id="PF00152">
    <property type="entry name" value="tRNA-synt_2"/>
    <property type="match status" value="1"/>
</dbReference>
<dbReference type="Pfam" id="PF01336">
    <property type="entry name" value="tRNA_anti-codon"/>
    <property type="match status" value="1"/>
</dbReference>
<dbReference type="PRINTS" id="PR00982">
    <property type="entry name" value="TRNASYNTHLYS"/>
</dbReference>
<dbReference type="SUPFAM" id="SSF55681">
    <property type="entry name" value="Class II aaRS and biotin synthetases"/>
    <property type="match status" value="1"/>
</dbReference>
<dbReference type="SUPFAM" id="SSF50249">
    <property type="entry name" value="Nucleic acid-binding proteins"/>
    <property type="match status" value="1"/>
</dbReference>
<dbReference type="PROSITE" id="PS50862">
    <property type="entry name" value="AA_TRNA_LIGASE_II"/>
    <property type="match status" value="1"/>
</dbReference>